<proteinExistence type="inferred from homology"/>
<reference key="1">
    <citation type="journal article" date="2009" name="Proc. Natl. Acad. Sci. U.S.A.">
        <title>Characterizing a model human gut microbiota composed of members of its two dominant bacterial phyla.</title>
        <authorList>
            <person name="Mahowald M.A."/>
            <person name="Rey F.E."/>
            <person name="Seedorf H."/>
            <person name="Turnbaugh P.J."/>
            <person name="Fulton R.S."/>
            <person name="Wollam A."/>
            <person name="Shah N."/>
            <person name="Wang C."/>
            <person name="Magrini V."/>
            <person name="Wilson R.K."/>
            <person name="Cantarel B.L."/>
            <person name="Coutinho P.M."/>
            <person name="Henrissat B."/>
            <person name="Crock L.W."/>
            <person name="Russell A."/>
            <person name="Verberkmoes N.C."/>
            <person name="Hettich R.L."/>
            <person name="Gordon J.I."/>
        </authorList>
    </citation>
    <scope>NUCLEOTIDE SEQUENCE [LARGE SCALE GENOMIC DNA]</scope>
    <source>
        <strain>ATCC 27750 / DSM 3376 / VPI C15-48 / C15-B4</strain>
    </source>
</reference>
<keyword id="KW-0963">Cytoplasm</keyword>
<keyword id="KW-0489">Methyltransferase</keyword>
<keyword id="KW-1185">Reference proteome</keyword>
<keyword id="KW-0949">S-adenosyl-L-methionine</keyword>
<keyword id="KW-0808">Transferase</keyword>
<keyword id="KW-0819">tRNA processing</keyword>
<dbReference type="EC" id="2.1.1.228" evidence="1"/>
<dbReference type="EMBL" id="CP001104">
    <property type="protein sequence ID" value="ACR72854.1"/>
    <property type="molecule type" value="Genomic_DNA"/>
</dbReference>
<dbReference type="RefSeq" id="WP_012740086.1">
    <property type="nucleotide sequence ID" value="NC_012778.1"/>
</dbReference>
<dbReference type="SMR" id="C4Z429"/>
<dbReference type="STRING" id="515620.EUBELI_01865"/>
<dbReference type="GeneID" id="41356514"/>
<dbReference type="KEGG" id="eel:EUBELI_01865"/>
<dbReference type="eggNOG" id="COG0336">
    <property type="taxonomic scope" value="Bacteria"/>
</dbReference>
<dbReference type="HOGENOM" id="CLU_047363_0_1_9"/>
<dbReference type="Proteomes" id="UP000001476">
    <property type="component" value="Chromosome"/>
</dbReference>
<dbReference type="GO" id="GO:0005829">
    <property type="term" value="C:cytosol"/>
    <property type="evidence" value="ECO:0007669"/>
    <property type="project" value="TreeGrafter"/>
</dbReference>
<dbReference type="GO" id="GO:0052906">
    <property type="term" value="F:tRNA (guanine(37)-N1)-methyltransferase activity"/>
    <property type="evidence" value="ECO:0007669"/>
    <property type="project" value="UniProtKB-UniRule"/>
</dbReference>
<dbReference type="GO" id="GO:0002939">
    <property type="term" value="P:tRNA N1-guanine methylation"/>
    <property type="evidence" value="ECO:0007669"/>
    <property type="project" value="TreeGrafter"/>
</dbReference>
<dbReference type="CDD" id="cd18080">
    <property type="entry name" value="TrmD-like"/>
    <property type="match status" value="1"/>
</dbReference>
<dbReference type="FunFam" id="1.10.1270.20:FF:000001">
    <property type="entry name" value="tRNA (guanine-N(1)-)-methyltransferase"/>
    <property type="match status" value="1"/>
</dbReference>
<dbReference type="FunFam" id="3.40.1280.10:FF:000001">
    <property type="entry name" value="tRNA (guanine-N(1)-)-methyltransferase"/>
    <property type="match status" value="1"/>
</dbReference>
<dbReference type="Gene3D" id="3.40.1280.10">
    <property type="match status" value="1"/>
</dbReference>
<dbReference type="Gene3D" id="1.10.1270.20">
    <property type="entry name" value="tRNA(m1g37)methyltransferase, domain 2"/>
    <property type="match status" value="1"/>
</dbReference>
<dbReference type="HAMAP" id="MF_00605">
    <property type="entry name" value="TrmD"/>
    <property type="match status" value="1"/>
</dbReference>
<dbReference type="InterPro" id="IPR029028">
    <property type="entry name" value="Alpha/beta_knot_MTases"/>
</dbReference>
<dbReference type="InterPro" id="IPR023148">
    <property type="entry name" value="tRNA_m1G_MeTrfase_C_sf"/>
</dbReference>
<dbReference type="InterPro" id="IPR002649">
    <property type="entry name" value="tRNA_m1G_MeTrfase_TrmD"/>
</dbReference>
<dbReference type="InterPro" id="IPR029026">
    <property type="entry name" value="tRNA_m1G_MTases_N"/>
</dbReference>
<dbReference type="InterPro" id="IPR016009">
    <property type="entry name" value="tRNA_MeTrfase_TRMD/TRM10"/>
</dbReference>
<dbReference type="NCBIfam" id="NF000648">
    <property type="entry name" value="PRK00026.1"/>
    <property type="match status" value="1"/>
</dbReference>
<dbReference type="NCBIfam" id="TIGR00088">
    <property type="entry name" value="trmD"/>
    <property type="match status" value="1"/>
</dbReference>
<dbReference type="PANTHER" id="PTHR46417">
    <property type="entry name" value="TRNA (GUANINE-N(1)-)-METHYLTRANSFERASE"/>
    <property type="match status" value="1"/>
</dbReference>
<dbReference type="PANTHER" id="PTHR46417:SF1">
    <property type="entry name" value="TRNA (GUANINE-N(1)-)-METHYLTRANSFERASE"/>
    <property type="match status" value="1"/>
</dbReference>
<dbReference type="Pfam" id="PF01746">
    <property type="entry name" value="tRNA_m1G_MT"/>
    <property type="match status" value="1"/>
</dbReference>
<dbReference type="PIRSF" id="PIRSF000386">
    <property type="entry name" value="tRNA_mtase"/>
    <property type="match status" value="1"/>
</dbReference>
<dbReference type="SUPFAM" id="SSF75217">
    <property type="entry name" value="alpha/beta knot"/>
    <property type="match status" value="1"/>
</dbReference>
<organism>
    <name type="scientific">Lachnospira eligens (strain ATCC 27750 / DSM 3376 / VPI C15-48 / C15-B4)</name>
    <name type="common">Eubacterium eligens</name>
    <dbReference type="NCBI Taxonomy" id="515620"/>
    <lineage>
        <taxon>Bacteria</taxon>
        <taxon>Bacillati</taxon>
        <taxon>Bacillota</taxon>
        <taxon>Clostridia</taxon>
        <taxon>Lachnospirales</taxon>
        <taxon>Lachnospiraceae</taxon>
        <taxon>Lachnospira</taxon>
    </lineage>
</organism>
<gene>
    <name evidence="1" type="primary">trmD</name>
    <name type="ordered locus">EUBELI_01865</name>
</gene>
<evidence type="ECO:0000255" key="1">
    <source>
        <dbReference type="HAMAP-Rule" id="MF_00605"/>
    </source>
</evidence>
<accession>C4Z429</accession>
<protein>
    <recommendedName>
        <fullName evidence="1">tRNA (guanine-N(1)-)-methyltransferase</fullName>
        <ecNumber evidence="1">2.1.1.228</ecNumber>
    </recommendedName>
    <alternativeName>
        <fullName evidence="1">M1G-methyltransferase</fullName>
    </alternativeName>
    <alternativeName>
        <fullName evidence="1">tRNA [GM37] methyltransferase</fullName>
    </alternativeName>
</protein>
<feature type="chain" id="PRO_1000212225" description="tRNA (guanine-N(1)-)-methyltransferase">
    <location>
        <begin position="1"/>
        <end position="236"/>
    </location>
</feature>
<feature type="binding site" evidence="1">
    <location>
        <position position="113"/>
    </location>
    <ligand>
        <name>S-adenosyl-L-methionine</name>
        <dbReference type="ChEBI" id="CHEBI:59789"/>
    </ligand>
</feature>
<feature type="binding site" evidence="1">
    <location>
        <begin position="133"/>
        <end position="138"/>
    </location>
    <ligand>
        <name>S-adenosyl-L-methionine</name>
        <dbReference type="ChEBI" id="CHEBI:59789"/>
    </ligand>
</feature>
<sequence>MDFHVMTLFPDMIMDGLNTSITGRAIKSGVMSVTAHDIRDYSNDKHLKVDDYPYGGGAGMVMRAAPVCDCYEDIVKNIGKRPRVIYMTPQGYTFTQKMAEDFAKEDNLVILCGHYEGIDERALENIVTDYVSIGDYVLTGGELPAMVVIDTISRLVPGVLNNEESAETESFSDGLLEYPQYTRPADYNGQLVPEVLLSGHHANIEKWRHEKSIERTKKYRPDLYEEYVKKHSDEFR</sequence>
<name>TRMD_LACE2</name>
<comment type="function">
    <text evidence="1">Specifically methylates guanosine-37 in various tRNAs.</text>
</comment>
<comment type="catalytic activity">
    <reaction evidence="1">
        <text>guanosine(37) in tRNA + S-adenosyl-L-methionine = N(1)-methylguanosine(37) in tRNA + S-adenosyl-L-homocysteine + H(+)</text>
        <dbReference type="Rhea" id="RHEA:36899"/>
        <dbReference type="Rhea" id="RHEA-COMP:10145"/>
        <dbReference type="Rhea" id="RHEA-COMP:10147"/>
        <dbReference type="ChEBI" id="CHEBI:15378"/>
        <dbReference type="ChEBI" id="CHEBI:57856"/>
        <dbReference type="ChEBI" id="CHEBI:59789"/>
        <dbReference type="ChEBI" id="CHEBI:73542"/>
        <dbReference type="ChEBI" id="CHEBI:74269"/>
        <dbReference type="EC" id="2.1.1.228"/>
    </reaction>
</comment>
<comment type="subunit">
    <text evidence="1">Homodimer.</text>
</comment>
<comment type="subcellular location">
    <subcellularLocation>
        <location evidence="1">Cytoplasm</location>
    </subcellularLocation>
</comment>
<comment type="similarity">
    <text evidence="1">Belongs to the RNA methyltransferase TrmD family.</text>
</comment>